<organism>
    <name type="scientific">Limosilactobacillus reuteri (strain DSM 20016)</name>
    <name type="common">Lactobacillus reuteri</name>
    <dbReference type="NCBI Taxonomy" id="557436"/>
    <lineage>
        <taxon>Bacteria</taxon>
        <taxon>Bacillati</taxon>
        <taxon>Bacillota</taxon>
        <taxon>Bacilli</taxon>
        <taxon>Lactobacillales</taxon>
        <taxon>Lactobacillaceae</taxon>
        <taxon>Limosilactobacillus</taxon>
    </lineage>
</organism>
<protein>
    <recommendedName>
        <fullName evidence="1">UPF0210 protein Lreu_0940</fullName>
    </recommendedName>
</protein>
<accession>A5VK28</accession>
<evidence type="ECO:0000255" key="1">
    <source>
        <dbReference type="HAMAP-Rule" id="MF_01221"/>
    </source>
</evidence>
<proteinExistence type="inferred from homology"/>
<sequence>MNSQQIYETSHMISNENLDVRTITMGISLLDCIDSDSTVACQKIYDKITTKAKNLVKVGQQIEAEYGIPIANKRVTVTPISLIAAASQDHDYVKYAKTLDKAAKTLGIDFIGGYSALVQKGYQTGDRTLIASLPEALAETDFVCASVNVGSTRSGINMDAVAQMGEVVVAGSKLDMMTNAKLVIFCNAVEDNPFMAGGFHGVGEPDVVINVGVSGPGVIKTALEKVKGESMDVVAETIKKTAFKVTRMGQLVGTVGAERLGVQFGIVDLSLAPTAAAGDSVAEVLEEIGVAQVGTHGTTAALAMLNDAVKKGGIMACSHVGGLSGAFIPVSEDAGMIKAVNAGTLNISKLEAMTAVCSVGLDMIAIPGDTPKETISAMIADEAAIGMINNKTTAVRVIPAPGKKVGDTVEFGGLLGYAPVMAVNKVASTAMINRGGLIPAPIHSFKN</sequence>
<keyword id="KW-1185">Reference proteome</keyword>
<comment type="subunit">
    <text evidence="1">Homodimer.</text>
</comment>
<comment type="similarity">
    <text evidence="1">Belongs to the UPF0210 family.</text>
</comment>
<gene>
    <name type="ordered locus">Lreu_0940</name>
</gene>
<name>Y940_LIMRD</name>
<feature type="chain" id="PRO_1000066757" description="UPF0210 protein Lreu_0940">
    <location>
        <begin position="1"/>
        <end position="447"/>
    </location>
</feature>
<dbReference type="EMBL" id="CP000705">
    <property type="protein sequence ID" value="ABQ83202.1"/>
    <property type="molecule type" value="Genomic_DNA"/>
</dbReference>
<dbReference type="RefSeq" id="WP_003667841.1">
    <property type="nucleotide sequence ID" value="NC_009513.1"/>
</dbReference>
<dbReference type="SMR" id="A5VK28"/>
<dbReference type="STRING" id="557436.Lreu_0940"/>
<dbReference type="KEGG" id="lre:Lreu_0940"/>
<dbReference type="PATRIC" id="fig|557436.17.peg.917"/>
<dbReference type="eggNOG" id="COG2848">
    <property type="taxonomic scope" value="Bacteria"/>
</dbReference>
<dbReference type="HOGENOM" id="CLU_048704_0_0_9"/>
<dbReference type="Proteomes" id="UP000001991">
    <property type="component" value="Chromosome"/>
</dbReference>
<dbReference type="CDD" id="cd08025">
    <property type="entry name" value="RNR_PFL_like_DUF711"/>
    <property type="match status" value="1"/>
</dbReference>
<dbReference type="Gene3D" id="3.20.70.20">
    <property type="match status" value="1"/>
</dbReference>
<dbReference type="HAMAP" id="MF_01221">
    <property type="entry name" value="UPF0210"/>
    <property type="match status" value="1"/>
</dbReference>
<dbReference type="InterPro" id="IPR007841">
    <property type="entry name" value="UPF0210"/>
</dbReference>
<dbReference type="NCBIfam" id="NF003700">
    <property type="entry name" value="PRK05313.1"/>
    <property type="match status" value="1"/>
</dbReference>
<dbReference type="PANTHER" id="PTHR37560:SF1">
    <property type="entry name" value="UPF0210 PROTEIN MJ1665"/>
    <property type="match status" value="1"/>
</dbReference>
<dbReference type="PANTHER" id="PTHR37560">
    <property type="entry name" value="UPF0210 PROTEIN SPR0218"/>
    <property type="match status" value="1"/>
</dbReference>
<dbReference type="Pfam" id="PF05167">
    <property type="entry name" value="DUF711"/>
    <property type="match status" value="1"/>
</dbReference>
<dbReference type="SUPFAM" id="SSF51998">
    <property type="entry name" value="PFL-like glycyl radical enzymes"/>
    <property type="match status" value="1"/>
</dbReference>
<reference key="1">
    <citation type="journal article" date="2011" name="PLoS Genet.">
        <title>The evolution of host specialization in the vertebrate gut symbiont Lactobacillus reuteri.</title>
        <authorList>
            <person name="Frese S.A."/>
            <person name="Benson A.K."/>
            <person name="Tannock G.W."/>
            <person name="Loach D.M."/>
            <person name="Kim J."/>
            <person name="Zhang M."/>
            <person name="Oh P.L."/>
            <person name="Heng N.C."/>
            <person name="Patil P.B."/>
            <person name="Juge N."/>
            <person name="Mackenzie D.A."/>
            <person name="Pearson B.M."/>
            <person name="Lapidus A."/>
            <person name="Dalin E."/>
            <person name="Tice H."/>
            <person name="Goltsman E."/>
            <person name="Land M."/>
            <person name="Hauser L."/>
            <person name="Ivanova N."/>
            <person name="Kyrpides N.C."/>
            <person name="Walter J."/>
        </authorList>
    </citation>
    <scope>NUCLEOTIDE SEQUENCE [LARGE SCALE GENOMIC DNA]</scope>
    <source>
        <strain>DSM 20016</strain>
    </source>
</reference>